<comment type="function">
    <text evidence="1 2">Component of the SKA complex, a microtubule plus end-binding complex of the outer kinetochore that stabilizes spindle microtubule-kinetochore attachments, promotes alignment of chromosomes at the mitotic spindle equator (chromosome congression) and assists suppression of the spindle assembly checkpoint. Kinetochores, consisting of a centromere-associated inner segment and a microtubule-contacting outer segment, play a crucial role in chromosome segregation by mediating the physical connection between centromeric DNA and spindle microtubules. The outer kinetochore is made up of the ten-subunit KMN network complex, comprising the MIS12, NDC80 and KNL1 complexes, and auxiliary microtubule-associated components such as the SKA complex; together they connect the outer kinetochore with the inner kinetochore, bind microtubules, and mediate interactions with mitotic checkpoint proteins that delay anaphase until chromosomes are bioriented on the spindle. The SKA complex is loaded onto bioriented kinetochores and it facilitates chromosome congression by stabilizing microtubules together with MAPRE1, and end-on attachment of the NDC80 complex to depolymerizing spindle microtubules, thereby assisting the poleward-moving kinetochore in withstanding microtubule pulling forces. The complex associates with dynamic microtubule plus-ends and can track both depolymerizing and elongating microtubules. The complex recruits protein phosphatase 1 (PP1) to the kinetochore in prometaphase and metaphase, to oppose spindle assembly checkpoint signaling and promote the onset of anaphase. In the complex, it mediates interactions with microtubules. It also stimulates AURKB/Aurora B catalytic activity (By similarity). During meiosis the SKA complex stabilizes the meiotic spindle and is required for its migration to the cortex (By similarity).</text>
</comment>
<comment type="subunit">
    <text evidence="1">Component of the SKA complex, composed of SKA1, SKA2 and SKA3. The SKA complex is a homodimer organized around a central W-shaped coiled-coil structure, formed by the interacting domains of SKA1, SKA2, and SKA3, each end of the 'W' is extended further by the C-terminal microtubule-binding domains of SKA1 and SKA3; the complex forms extended structures on microtubules. Interacts (via SXLP motif) with MAPRE1 (via C-terminus); the interaction is direct and stabilizes the kinetochore-microtubule attachment of the SKA1 complex. Interacts (via C-terminus) with protein phosphatase PP1 subunit PPP1CA; the interaction is direct and required for recruitment of PPP1CA to the kinetochore. Interacts with the NDC80 complex; the interaction is required to establish kinetochore-microtubule end-on attachments.</text>
</comment>
<comment type="subcellular location">
    <subcellularLocation>
        <location evidence="1">Cytoplasm</location>
        <location evidence="1">Cytoskeleton</location>
        <location evidence="1">Spindle</location>
    </subcellularLocation>
    <subcellularLocation>
        <location evidence="1">Chromosome</location>
        <location evidence="1">Centromere</location>
        <location evidence="1">Kinetochore</location>
    </subcellularLocation>
    <subcellularLocation>
        <location evidence="1">Cytoplasm</location>
        <location evidence="1">Cytoskeleton</location>
        <location evidence="1">Microtubule organizing center</location>
        <location evidence="1">Centrosome</location>
    </subcellularLocation>
    <text evidence="1 2">Localizes to bioriented kinetochores and spindle microtubules during metaphase in a NDC80 complex-dependent manner (By similarity). The SKA complex begins to concentrate at kinetochores before microtubule attachment but reaches maximum levels on bioriented metaphase chromosomes (By similarity). Localizes both to microtubule plus-ends and along the length of microtubules (By similarity). The localization of the SKA complex to kinetochores is positively regulated by kinase CDK1 (By similarity). The localization of the SKA complex to kinetochores is negatively regulated by protein serine/threonine kinase AURKB, and this action is opposed directly or indirectly by the PP1 and PP2A protein phosphatase complexes (By similarity). Localizes at the centrosome during interphase and prophase (By similarity). Localizes to the meiotic spindle, but not to kinetochores, from the stage of germinal vesicle breakdown (GVBD) to meiosis II (MII) (By similarity).</text>
</comment>
<comment type="similarity">
    <text evidence="5">Belongs to the SKA1 family.</text>
</comment>
<feature type="chain" id="PRO_0000373887" description="SKA complex subunit 1">
    <location>
        <begin position="1"/>
        <end position="254"/>
    </location>
</feature>
<feature type="region of interest" description="Flexiple loop that anchors MAPRE1" evidence="1">
    <location>
        <begin position="91"/>
        <end position="131"/>
    </location>
</feature>
<feature type="region of interest" description="Disordered" evidence="4">
    <location>
        <begin position="97"/>
        <end position="127"/>
    </location>
</feature>
<feature type="region of interest" description="Binds microtubules and protein phosphatase PP1 subunit PPP1CA" evidence="1">
    <location>
        <begin position="131"/>
        <end position="254"/>
    </location>
</feature>
<feature type="coiled-coil region" evidence="3">
    <location>
        <begin position="58"/>
        <end position="90"/>
    </location>
</feature>
<feature type="short sequence motif" description="SXLP motif; mediates interaction with MAPRE1, targeting to microtubule plus ends, stabilization on kinetochores and is required for proper chromosome alignment to the metaphase plate" evidence="1">
    <location>
        <begin position="92"/>
        <end position="95"/>
    </location>
</feature>
<feature type="compositionally biased region" description="Basic and acidic residues" evidence="4">
    <location>
        <begin position="105"/>
        <end position="127"/>
    </location>
</feature>
<feature type="modified residue" description="Phosphothreonine" evidence="1">
    <location>
        <position position="156"/>
    </location>
</feature>
<feature type="modified residue" description="Phosphoserine" evidence="1">
    <location>
        <position position="241"/>
    </location>
</feature>
<sequence length="254" mass="29421">MASDLEQLCSYVNEKIENIKKILSLRKLGQDPTLKTTLSKIGDEIITVNELLNQFELEIQYQEQTNSSLKELCKSLEEEFKDVEHLKEHIPSHLPQVTVTQSSTHKPDLDPKESVKAEEPVLPKKPPKEQRVIKEMHFITTDEFSGVPAYMKSRLTYCQINDVIKEINKAVVSKYKIIHQPKASMSSVKRNLYQRFINEETKDTKGRHFIVEADIKEFTTLKVDKKFHVIMNILRHCQRLSEVRGGGLTRYVIT</sequence>
<evidence type="ECO:0000250" key="1">
    <source>
        <dbReference type="UniProtKB" id="Q96BD8"/>
    </source>
</evidence>
<evidence type="ECO:0000250" key="2">
    <source>
        <dbReference type="UniProtKB" id="Q9CPV1"/>
    </source>
</evidence>
<evidence type="ECO:0000255" key="3"/>
<evidence type="ECO:0000256" key="4">
    <source>
        <dbReference type="SAM" id="MobiDB-lite"/>
    </source>
</evidence>
<evidence type="ECO:0000305" key="5"/>
<protein>
    <recommendedName>
        <fullName evidence="5">SKA complex subunit 1</fullName>
    </recommendedName>
    <alternativeName>
        <fullName>Spindle and kinetochore-associated protein 1</fullName>
    </alternativeName>
</protein>
<proteinExistence type="evidence at transcript level"/>
<organism>
    <name type="scientific">Rattus norvegicus</name>
    <name type="common">Rat</name>
    <dbReference type="NCBI Taxonomy" id="10116"/>
    <lineage>
        <taxon>Eukaryota</taxon>
        <taxon>Metazoa</taxon>
        <taxon>Chordata</taxon>
        <taxon>Craniata</taxon>
        <taxon>Vertebrata</taxon>
        <taxon>Euteleostomi</taxon>
        <taxon>Mammalia</taxon>
        <taxon>Eutheria</taxon>
        <taxon>Euarchontoglires</taxon>
        <taxon>Glires</taxon>
        <taxon>Rodentia</taxon>
        <taxon>Myomorpha</taxon>
        <taxon>Muroidea</taxon>
        <taxon>Muridae</taxon>
        <taxon>Murinae</taxon>
        <taxon>Rattus</taxon>
    </lineage>
</organism>
<name>SKA1_RAT</name>
<dbReference type="EMBL" id="CH474095">
    <property type="protein sequence ID" value="EDL82905.1"/>
    <property type="molecule type" value="Genomic_DNA"/>
</dbReference>
<dbReference type="EMBL" id="CH474095">
    <property type="protein sequence ID" value="EDL82907.1"/>
    <property type="molecule type" value="Genomic_DNA"/>
</dbReference>
<dbReference type="EMBL" id="CH474095">
    <property type="protein sequence ID" value="EDL82908.1"/>
    <property type="molecule type" value="Genomic_DNA"/>
</dbReference>
<dbReference type="EMBL" id="BC158659">
    <property type="protein sequence ID" value="AAI58660.1"/>
    <property type="molecule type" value="mRNA"/>
</dbReference>
<dbReference type="RefSeq" id="NP_001099604.1">
    <property type="nucleotide sequence ID" value="NM_001106134.1"/>
</dbReference>
<dbReference type="RefSeq" id="XP_006254982.1">
    <property type="nucleotide sequence ID" value="XM_006254920.5"/>
</dbReference>
<dbReference type="SMR" id="B0BN28"/>
<dbReference type="FunCoup" id="B0BN28">
    <property type="interactions" value="734"/>
</dbReference>
<dbReference type="STRING" id="10116.ENSRNOP00000020637"/>
<dbReference type="PhosphoSitePlus" id="B0BN28"/>
<dbReference type="PaxDb" id="10116-ENSRNOP00000020637"/>
<dbReference type="Ensembl" id="ENSRNOT00000020637.7">
    <property type="protein sequence ID" value="ENSRNOP00000020637.5"/>
    <property type="gene ID" value="ENSRNOG00000015275.7"/>
</dbReference>
<dbReference type="GeneID" id="291441"/>
<dbReference type="KEGG" id="rno:291441"/>
<dbReference type="AGR" id="RGD:1310784"/>
<dbReference type="CTD" id="220134"/>
<dbReference type="RGD" id="1310784">
    <property type="gene designation" value="Ska1"/>
</dbReference>
<dbReference type="eggNOG" id="KOG4832">
    <property type="taxonomic scope" value="Eukaryota"/>
</dbReference>
<dbReference type="GeneTree" id="ENSGT00390000011654"/>
<dbReference type="HOGENOM" id="CLU_096842_0_0_1"/>
<dbReference type="InParanoid" id="B0BN28"/>
<dbReference type="OMA" id="PTGMRED"/>
<dbReference type="PhylomeDB" id="B0BN28"/>
<dbReference type="TreeFam" id="TF324442"/>
<dbReference type="Reactome" id="R-RNO-141444">
    <property type="pathway name" value="Amplification of signal from unattached kinetochores via a MAD2 inhibitory signal"/>
</dbReference>
<dbReference type="Reactome" id="R-RNO-2467813">
    <property type="pathway name" value="Separation of Sister Chromatids"/>
</dbReference>
<dbReference type="Reactome" id="R-RNO-2500257">
    <property type="pathway name" value="Resolution of Sister Chromatid Cohesion"/>
</dbReference>
<dbReference type="Reactome" id="R-RNO-5663220">
    <property type="pathway name" value="RHO GTPases Activate Formins"/>
</dbReference>
<dbReference type="Reactome" id="R-RNO-68877">
    <property type="pathway name" value="Mitotic Prometaphase"/>
</dbReference>
<dbReference type="Reactome" id="R-RNO-9648025">
    <property type="pathway name" value="EML4 and NUDC in mitotic spindle formation"/>
</dbReference>
<dbReference type="PRO" id="PR:B0BN28"/>
<dbReference type="Proteomes" id="UP000002494">
    <property type="component" value="Chromosome 18"/>
</dbReference>
<dbReference type="Proteomes" id="UP000234681">
    <property type="component" value="Chromosome 18"/>
</dbReference>
<dbReference type="Bgee" id="ENSRNOG00000015275">
    <property type="expression patterns" value="Expressed in thymus and 15 other cell types or tissues"/>
</dbReference>
<dbReference type="GO" id="GO:0034451">
    <property type="term" value="C:centriolar satellite"/>
    <property type="evidence" value="ECO:0007669"/>
    <property type="project" value="Ensembl"/>
</dbReference>
<dbReference type="GO" id="GO:0005813">
    <property type="term" value="C:centrosome"/>
    <property type="evidence" value="ECO:0000250"/>
    <property type="project" value="UniProtKB"/>
</dbReference>
<dbReference type="GO" id="GO:0036064">
    <property type="term" value="C:ciliary basal body"/>
    <property type="evidence" value="ECO:0007669"/>
    <property type="project" value="Ensembl"/>
</dbReference>
<dbReference type="GO" id="GO:0005737">
    <property type="term" value="C:cytoplasm"/>
    <property type="evidence" value="ECO:0007669"/>
    <property type="project" value="UniProtKB-KW"/>
</dbReference>
<dbReference type="GO" id="GO:0045171">
    <property type="term" value="C:intercellular bridge"/>
    <property type="evidence" value="ECO:0007669"/>
    <property type="project" value="Ensembl"/>
</dbReference>
<dbReference type="GO" id="GO:0000776">
    <property type="term" value="C:kinetochore"/>
    <property type="evidence" value="ECO:0000266"/>
    <property type="project" value="RGD"/>
</dbReference>
<dbReference type="GO" id="GO:0072687">
    <property type="term" value="C:meiotic spindle"/>
    <property type="evidence" value="ECO:0000250"/>
    <property type="project" value="UniProtKB"/>
</dbReference>
<dbReference type="GO" id="GO:0072686">
    <property type="term" value="C:mitotic spindle"/>
    <property type="evidence" value="ECO:0000250"/>
    <property type="project" value="UniProtKB"/>
</dbReference>
<dbReference type="GO" id="GO:1990498">
    <property type="term" value="C:mitotic spindle microtubule"/>
    <property type="evidence" value="ECO:0000266"/>
    <property type="project" value="RGD"/>
</dbReference>
<dbReference type="GO" id="GO:0005654">
    <property type="term" value="C:nucleoplasm"/>
    <property type="evidence" value="ECO:0007669"/>
    <property type="project" value="Ensembl"/>
</dbReference>
<dbReference type="GO" id="GO:0000940">
    <property type="term" value="C:outer kinetochore"/>
    <property type="evidence" value="ECO:0000250"/>
    <property type="project" value="UniProtKB"/>
</dbReference>
<dbReference type="GO" id="GO:0170027">
    <property type="term" value="C:SKA complex"/>
    <property type="evidence" value="ECO:0000266"/>
    <property type="project" value="RGD"/>
</dbReference>
<dbReference type="GO" id="GO:0005876">
    <property type="term" value="C:spindle microtubule"/>
    <property type="evidence" value="ECO:0000266"/>
    <property type="project" value="RGD"/>
</dbReference>
<dbReference type="GO" id="GO:0008017">
    <property type="term" value="F:microtubule binding"/>
    <property type="evidence" value="ECO:0000250"/>
    <property type="project" value="UniProtKB"/>
</dbReference>
<dbReference type="GO" id="GO:0051315">
    <property type="term" value="P:attachment of mitotic spindle microtubules to kinetochore"/>
    <property type="evidence" value="ECO:0000250"/>
    <property type="project" value="UniProtKB"/>
</dbReference>
<dbReference type="GO" id="GO:0051301">
    <property type="term" value="P:cell division"/>
    <property type="evidence" value="ECO:0007669"/>
    <property type="project" value="UniProtKB-KW"/>
</dbReference>
<dbReference type="GO" id="GO:0007059">
    <property type="term" value="P:chromosome segregation"/>
    <property type="evidence" value="ECO:0000318"/>
    <property type="project" value="GO_Central"/>
</dbReference>
<dbReference type="GO" id="GO:0051296">
    <property type="term" value="P:establishment of meiotic spindle orientation"/>
    <property type="evidence" value="ECO:0000250"/>
    <property type="project" value="UniProtKB"/>
</dbReference>
<dbReference type="GO" id="GO:0051310">
    <property type="term" value="P:metaphase chromosome alignment"/>
    <property type="evidence" value="ECO:0000266"/>
    <property type="project" value="RGD"/>
</dbReference>
<dbReference type="GO" id="GO:0000278">
    <property type="term" value="P:mitotic cell cycle"/>
    <property type="evidence" value="ECO:0000250"/>
    <property type="project" value="UniProtKB"/>
</dbReference>
<dbReference type="GO" id="GO:0007080">
    <property type="term" value="P:mitotic metaphase chromosome alignment"/>
    <property type="evidence" value="ECO:0000250"/>
    <property type="project" value="UniProtKB"/>
</dbReference>
<dbReference type="GO" id="GO:0000070">
    <property type="term" value="P:mitotic sister chromatid segregation"/>
    <property type="evidence" value="ECO:0000250"/>
    <property type="project" value="UniProtKB"/>
</dbReference>
<dbReference type="GO" id="GO:0140499">
    <property type="term" value="P:negative regulation of mitotic spindle assembly checkpoint signaling"/>
    <property type="evidence" value="ECO:0000250"/>
    <property type="project" value="UniProtKB"/>
</dbReference>
<dbReference type="GO" id="GO:0031116">
    <property type="term" value="P:positive regulation of microtubule polymerization"/>
    <property type="evidence" value="ECO:0000266"/>
    <property type="project" value="RGD"/>
</dbReference>
<dbReference type="GO" id="GO:0031110">
    <property type="term" value="P:regulation of microtubule polymerization or depolymerization"/>
    <property type="evidence" value="ECO:0000250"/>
    <property type="project" value="UniProtKB"/>
</dbReference>
<dbReference type="GO" id="GO:0007056">
    <property type="term" value="P:spindle assembly involved in female meiosis"/>
    <property type="evidence" value="ECO:0000250"/>
    <property type="project" value="UniProtKB"/>
</dbReference>
<dbReference type="CDD" id="cd12958">
    <property type="entry name" value="SKA1_N"/>
    <property type="match status" value="1"/>
</dbReference>
<dbReference type="FunFam" id="1.10.10.1890:FF:000001">
    <property type="entry name" value="Spindle and kinetochore-associated protein 1"/>
    <property type="match status" value="1"/>
</dbReference>
<dbReference type="Gene3D" id="6.10.250.1370">
    <property type="match status" value="1"/>
</dbReference>
<dbReference type="Gene3D" id="1.10.10.1890">
    <property type="entry name" value="Ska1 microtubule binding domain-like"/>
    <property type="match status" value="1"/>
</dbReference>
<dbReference type="InterPro" id="IPR009829">
    <property type="entry name" value="SKA1"/>
</dbReference>
<dbReference type="InterPro" id="IPR042031">
    <property type="entry name" value="SKA1_MBD_sf"/>
</dbReference>
<dbReference type="PANTHER" id="PTHR28573">
    <property type="entry name" value="SPINDLE AND KINETOCHORE-ASSOCIATED PROTEIN 1"/>
    <property type="match status" value="1"/>
</dbReference>
<dbReference type="PANTHER" id="PTHR28573:SF1">
    <property type="entry name" value="SPINDLE AND KINETOCHORE-ASSOCIATED PROTEIN 1"/>
    <property type="match status" value="1"/>
</dbReference>
<dbReference type="Pfam" id="PF07160">
    <property type="entry name" value="SKA1"/>
    <property type="match status" value="1"/>
</dbReference>
<keyword id="KW-0131">Cell cycle</keyword>
<keyword id="KW-0132">Cell division</keyword>
<keyword id="KW-0137">Centromere</keyword>
<keyword id="KW-0158">Chromosome</keyword>
<keyword id="KW-0175">Coiled coil</keyword>
<keyword id="KW-0963">Cytoplasm</keyword>
<keyword id="KW-0206">Cytoskeleton</keyword>
<keyword id="KW-0995">Kinetochore</keyword>
<keyword id="KW-0493">Microtubule</keyword>
<keyword id="KW-0498">Mitosis</keyword>
<keyword id="KW-0597">Phosphoprotein</keyword>
<keyword id="KW-1185">Reference proteome</keyword>
<gene>
    <name type="primary">Ska1</name>
</gene>
<reference key="1">
    <citation type="submission" date="2005-09" db="EMBL/GenBank/DDBJ databases">
        <authorList>
            <person name="Mural R.J."/>
            <person name="Adams M.D."/>
            <person name="Myers E.W."/>
            <person name="Smith H.O."/>
            <person name="Venter J.C."/>
        </authorList>
    </citation>
    <scope>NUCLEOTIDE SEQUENCE [LARGE SCALE GENOMIC DNA]</scope>
    <source>
        <strain>Brown Norway</strain>
    </source>
</reference>
<reference key="2">
    <citation type="journal article" date="2004" name="Genome Res.">
        <title>The status, quality, and expansion of the NIH full-length cDNA project: the Mammalian Gene Collection (MGC).</title>
        <authorList>
            <consortium name="The MGC Project Team"/>
        </authorList>
    </citation>
    <scope>NUCLEOTIDE SEQUENCE [LARGE SCALE MRNA]</scope>
    <source>
        <tissue>Brain</tissue>
    </source>
</reference>
<accession>B0BN28</accession>